<organismHost>
    <name type="scientific">Acheta domesticus</name>
    <name type="common">House cricket</name>
    <dbReference type="NCBI Taxonomy" id="6997"/>
</organismHost>
<organismHost>
    <name type="scientific">Chilo suppressalis</name>
    <name type="common">Asiatic rice borer moth</name>
    <dbReference type="NCBI Taxonomy" id="168631"/>
</organismHost>
<organismHost>
    <name type="scientific">Gryllus bimaculatus</name>
    <name type="common">Two-spotted cricket</name>
    <dbReference type="NCBI Taxonomy" id="6999"/>
</organismHost>
<organismHost>
    <name type="scientific">Gryllus campestris</name>
    <dbReference type="NCBI Taxonomy" id="58607"/>
</organismHost>
<organismHost>
    <name type="scientific">Spodoptera frugiperda</name>
    <name type="common">Fall armyworm</name>
    <dbReference type="NCBI Taxonomy" id="7108"/>
</organismHost>
<name>VF307_IIV6</name>
<feature type="chain" id="PRO_0000377851" description="Uncharacterized protein 307L">
    <location>
        <begin position="1"/>
        <end position="197"/>
    </location>
</feature>
<feature type="transmembrane region" description="Helical" evidence="1">
    <location>
        <begin position="7"/>
        <end position="27"/>
    </location>
</feature>
<keyword id="KW-0472">Membrane</keyword>
<keyword id="KW-1185">Reference proteome</keyword>
<keyword id="KW-0812">Transmembrane</keyword>
<keyword id="KW-1133">Transmembrane helix</keyword>
<reference key="1">
    <citation type="journal article" date="2001" name="Virology">
        <title>Analysis of the first complete DNA sequence of an invertebrate iridovirus: coding strategy of the genome of Chilo iridescent virus.</title>
        <authorList>
            <person name="Jakob N.J."/>
            <person name="Mueller K."/>
            <person name="Bahr U."/>
            <person name="Darai G."/>
        </authorList>
    </citation>
    <scope>NUCLEOTIDE SEQUENCE [LARGE SCALE GENOMIC DNA]</scope>
</reference>
<reference key="2">
    <citation type="journal article" date="2007" name="Virol. J.">
        <title>Comparative genomic analysis of the family Iridoviridae: re-annotating and defining the core set of iridovirus genes.</title>
        <authorList>
            <person name="Eaton H.E."/>
            <person name="Metcalf J."/>
            <person name="Penny E."/>
            <person name="Tcherepanov V."/>
            <person name="Upton C."/>
            <person name="Brunetti C.R."/>
        </authorList>
    </citation>
    <scope>GENOME REANNOTATION</scope>
</reference>
<evidence type="ECO:0000255" key="1"/>
<evidence type="ECO:0000305" key="2"/>
<gene>
    <name type="ORF">IIV6-307L</name>
</gene>
<sequence length="197" mass="22876">MPQTILPISVGQMVLICIFILIILFVITKAKGIKGSWSKKSEIDPFINHSLSFYVPEEDELKDSEGERICRKFLRETVGVLFKDRDGNPEPFNKARPDFLKNPVTSGKNGNFNLEIDCYSPKLKLGVEYNGAQHYKFIPHFHKNKEAFRNQQYRDELKRRMCNDNNVTLIEVPYTVKDIPTYLYNKLKPLGYLNSLQ</sequence>
<proteinExistence type="inferred from homology"/>
<organism>
    <name type="scientific">Invertebrate iridescent virus 6</name>
    <name type="common">IIV-6</name>
    <name type="synonym">Chilo iridescent virus</name>
    <dbReference type="NCBI Taxonomy" id="176652"/>
    <lineage>
        <taxon>Viruses</taxon>
        <taxon>Varidnaviria</taxon>
        <taxon>Bamfordvirae</taxon>
        <taxon>Nucleocytoviricota</taxon>
        <taxon>Megaviricetes</taxon>
        <taxon>Pimascovirales</taxon>
        <taxon>Iridoviridae</taxon>
        <taxon>Betairidovirinae</taxon>
        <taxon>Iridovirus</taxon>
    </lineage>
</organism>
<accession>Q91FL7</accession>
<protein>
    <recommendedName>
        <fullName>Uncharacterized protein 307L</fullName>
    </recommendedName>
</protein>
<dbReference type="EMBL" id="AF303741">
    <property type="protein sequence ID" value="AAK82168.1"/>
    <property type="molecule type" value="Genomic_DNA"/>
</dbReference>
<dbReference type="RefSeq" id="NP_149770.1">
    <property type="nucleotide sequence ID" value="NC_003038.1"/>
</dbReference>
<dbReference type="SMR" id="Q91FL7"/>
<dbReference type="KEGG" id="vg:1733158"/>
<dbReference type="OrthoDB" id="14596at10239"/>
<dbReference type="Proteomes" id="UP000001359">
    <property type="component" value="Genome"/>
</dbReference>
<dbReference type="GO" id="GO:0016020">
    <property type="term" value="C:membrane"/>
    <property type="evidence" value="ECO:0007669"/>
    <property type="project" value="UniProtKB-SubCell"/>
</dbReference>
<dbReference type="Gene3D" id="3.40.960.10">
    <property type="entry name" value="VSR Endonuclease"/>
    <property type="match status" value="1"/>
</dbReference>
<comment type="subcellular location">
    <subcellularLocation>
        <location evidence="2">Membrane</location>
        <topology evidence="2">Single-pass membrane protein</topology>
    </subcellularLocation>
</comment>
<comment type="similarity">
    <text evidence="2">Belongs to the IIV-6 307L family.</text>
</comment>